<accession>Q8C636</accession>
<accession>Q9D5W9</accession>
<feature type="chain" id="PRO_0000315832" description="Spermatogenesis-associated protein 16">
    <location>
        <begin position="1"/>
        <end position="571"/>
    </location>
</feature>
<feature type="region of interest" description="Disordered" evidence="1">
    <location>
        <begin position="30"/>
        <end position="58"/>
    </location>
</feature>
<feature type="compositionally biased region" description="Polar residues" evidence="1">
    <location>
        <begin position="30"/>
        <end position="42"/>
    </location>
</feature>
<feature type="splice variant" id="VSP_030726" description="In isoform 2." evidence="5 6">
    <original>GRIEDFLYQLEDSFLKTKKLRTARRQKTKMKRLQTVQQN</original>
    <variation>KF</variation>
    <location>
        <begin position="533"/>
        <end position="571"/>
    </location>
</feature>
<feature type="mutagenesis site" description="No loss of male fertility." evidence="4">
    <original>R</original>
    <variation>Q</variation>
    <location>
        <position position="284"/>
    </location>
</feature>
<keyword id="KW-0025">Alternative splicing</keyword>
<keyword id="KW-0968">Cytoplasmic vesicle</keyword>
<keyword id="KW-0217">Developmental protein</keyword>
<keyword id="KW-0221">Differentiation</keyword>
<keyword id="KW-0333">Golgi apparatus</keyword>
<keyword id="KW-1185">Reference proteome</keyword>
<keyword id="KW-0744">Spermatogenesis</keyword>
<name>SPT16_MOUSE</name>
<gene>
    <name type="primary">Spata16</name>
</gene>
<comment type="function">
    <text evidence="3 4">Essential for spermiogenesis and male fertility (PubMed:29065458). Involved in the formation of acrosome during spermatogenesis (PubMed:16372119).</text>
</comment>
<comment type="subcellular location">
    <subcellularLocation>
        <location evidence="2 3">Golgi apparatus</location>
    </subcellularLocation>
    <subcellularLocation>
        <location evidence="3">Cytoplasmic vesicle</location>
        <location evidence="3">Secretory vesicle</location>
        <location evidence="3">Acrosome</location>
    </subcellularLocation>
    <text evidence="3">Shift from Golgi to sperm acrosome.</text>
</comment>
<comment type="alternative products">
    <event type="alternative splicing"/>
    <isoform>
        <id>Q8C636-1</id>
        <name>1</name>
        <sequence type="displayed"/>
    </isoform>
    <isoform>
        <id>Q8C636-2</id>
        <name>2</name>
        <sequence type="described" ref="VSP_030726"/>
    </isoform>
</comment>
<comment type="tissue specificity">
    <text evidence="2 3 4">Testis-specific. Expressed in spermatocytes and round and elongated spermatids in the seminiferous tubules.</text>
</comment>
<comment type="disruption phenotype">
    <text evidence="4">Male mice are infertile with spermiogenic arrest and impaired differentiation of round spermatids into the mature spermatozoa.</text>
</comment>
<comment type="similarity">
    <text evidence="7">Belongs to the SPATA16 family.</text>
</comment>
<dbReference type="EMBL" id="AK076628">
    <property type="protein sequence ID" value="BAC36421.1"/>
    <property type="molecule type" value="mRNA"/>
</dbReference>
<dbReference type="EMBL" id="AK014869">
    <property type="protein sequence ID" value="BAB29592.1"/>
    <property type="molecule type" value="mRNA"/>
</dbReference>
<dbReference type="EMBL" id="BC100443">
    <property type="protein sequence ID" value="AAI00444.1"/>
    <property type="molecule type" value="mRNA"/>
</dbReference>
<dbReference type="EMBL" id="BC132205">
    <property type="protein sequence ID" value="AAI32206.1"/>
    <property type="molecule type" value="mRNA"/>
</dbReference>
<dbReference type="EMBL" id="BC132539">
    <property type="protein sequence ID" value="AAI32540.1"/>
    <property type="molecule type" value="mRNA"/>
</dbReference>
<dbReference type="CCDS" id="CCDS17269.1">
    <molecule id="Q8C636-1"/>
</dbReference>
<dbReference type="CCDS" id="CCDS38403.1">
    <molecule id="Q8C636-2"/>
</dbReference>
<dbReference type="RefSeq" id="NP_081859.1">
    <molecule id="Q8C636-2"/>
    <property type="nucleotide sequence ID" value="NM_027583.3"/>
</dbReference>
<dbReference type="RefSeq" id="NP_083426.1">
    <molecule id="Q8C636-1"/>
    <property type="nucleotide sequence ID" value="NM_029150.4"/>
</dbReference>
<dbReference type="SMR" id="Q8C636"/>
<dbReference type="FunCoup" id="Q8C636">
    <property type="interactions" value="249"/>
</dbReference>
<dbReference type="STRING" id="10090.ENSMUSP00000043378"/>
<dbReference type="GlyGen" id="Q8C636">
    <property type="glycosylation" value="1 site"/>
</dbReference>
<dbReference type="iPTMnet" id="Q8C636"/>
<dbReference type="PhosphoSitePlus" id="Q8C636"/>
<dbReference type="PaxDb" id="10090-ENSMUSP00000043378"/>
<dbReference type="ProteomicsDB" id="263331">
    <molecule id="Q8C636-1"/>
</dbReference>
<dbReference type="ProteomicsDB" id="263332">
    <molecule id="Q8C636-2"/>
</dbReference>
<dbReference type="Antibodypedia" id="46805">
    <property type="antibodies" value="80 antibodies from 19 providers"/>
</dbReference>
<dbReference type="DNASU" id="70862"/>
<dbReference type="Ensembl" id="ENSMUST00000047005.11">
    <molecule id="Q8C636-1"/>
    <property type="protein sequence ID" value="ENSMUSP00000043378.5"/>
    <property type="gene ID" value="ENSMUSG00000039335.12"/>
</dbReference>
<dbReference type="Ensembl" id="ENSMUST00000108305.2">
    <molecule id="Q8C636-2"/>
    <property type="protein sequence ID" value="ENSMUSP00000103941.2"/>
    <property type="gene ID" value="ENSMUSG00000039335.12"/>
</dbReference>
<dbReference type="GeneID" id="70862"/>
<dbReference type="KEGG" id="mmu:70862"/>
<dbReference type="UCSC" id="uc008otf.2">
    <molecule id="Q8C636-2"/>
    <property type="organism name" value="mouse"/>
</dbReference>
<dbReference type="UCSC" id="uc008otg.1">
    <molecule id="Q8C636-1"/>
    <property type="organism name" value="mouse"/>
</dbReference>
<dbReference type="AGR" id="MGI:1918112"/>
<dbReference type="CTD" id="83893"/>
<dbReference type="MGI" id="MGI:1918112">
    <property type="gene designation" value="Spata16"/>
</dbReference>
<dbReference type="VEuPathDB" id="HostDB:ENSMUSG00000039335"/>
<dbReference type="eggNOG" id="ENOG502RSQ1">
    <property type="taxonomic scope" value="Eukaryota"/>
</dbReference>
<dbReference type="GeneTree" id="ENSGT00390000015332"/>
<dbReference type="HOGENOM" id="CLU_034262_0_0_1"/>
<dbReference type="InParanoid" id="Q8C636"/>
<dbReference type="OMA" id="LIRLYWQ"/>
<dbReference type="OrthoDB" id="9930656at2759"/>
<dbReference type="TreeFam" id="TF335624"/>
<dbReference type="BioGRID-ORCS" id="70862">
    <property type="hits" value="2 hits in 77 CRISPR screens"/>
</dbReference>
<dbReference type="ChiTaRS" id="Spata16">
    <property type="organism name" value="mouse"/>
</dbReference>
<dbReference type="PRO" id="PR:Q8C636"/>
<dbReference type="Proteomes" id="UP000000589">
    <property type="component" value="Chromosome 3"/>
</dbReference>
<dbReference type="RNAct" id="Q8C636">
    <property type="molecule type" value="protein"/>
</dbReference>
<dbReference type="Bgee" id="ENSMUSG00000039335">
    <property type="expression patterns" value="Expressed in spermatid and 3 other cell types or tissues"/>
</dbReference>
<dbReference type="GO" id="GO:0001669">
    <property type="term" value="C:acrosomal vesicle"/>
    <property type="evidence" value="ECO:0007669"/>
    <property type="project" value="UniProtKB-SubCell"/>
</dbReference>
<dbReference type="GO" id="GO:0005794">
    <property type="term" value="C:Golgi apparatus"/>
    <property type="evidence" value="ECO:0000266"/>
    <property type="project" value="MGI"/>
</dbReference>
<dbReference type="GO" id="GO:0007286">
    <property type="term" value="P:spermatid development"/>
    <property type="evidence" value="ECO:0000315"/>
    <property type="project" value="UniProtKB"/>
</dbReference>
<dbReference type="GO" id="GO:0007283">
    <property type="term" value="P:spermatogenesis"/>
    <property type="evidence" value="ECO:0000315"/>
    <property type="project" value="MGI"/>
</dbReference>
<dbReference type="FunFam" id="1.25.40.10:FF:000281">
    <property type="entry name" value="Spermatogenesis associated 16"/>
    <property type="match status" value="1"/>
</dbReference>
<dbReference type="Gene3D" id="1.25.40.10">
    <property type="entry name" value="Tetratricopeptide repeat domain"/>
    <property type="match status" value="1"/>
</dbReference>
<dbReference type="InterPro" id="IPR029161">
    <property type="entry name" value="SPATA16"/>
</dbReference>
<dbReference type="InterPro" id="IPR011990">
    <property type="entry name" value="TPR-like_helical_dom_sf"/>
</dbReference>
<dbReference type="PANTHER" id="PTHR47228">
    <property type="entry name" value="SPERMATOGENESIS-ASSOCIATED PROTEIN 16"/>
    <property type="match status" value="1"/>
</dbReference>
<dbReference type="PANTHER" id="PTHR47228:SF1">
    <property type="entry name" value="SPERMATOGENESIS-ASSOCIATED PROTEIN 16"/>
    <property type="match status" value="1"/>
</dbReference>
<dbReference type="Pfam" id="PF15015">
    <property type="entry name" value="NYD-SP12_N"/>
    <property type="match status" value="1"/>
</dbReference>
<dbReference type="SUPFAM" id="SSF48452">
    <property type="entry name" value="TPR-like"/>
    <property type="match status" value="1"/>
</dbReference>
<protein>
    <recommendedName>
        <fullName>Spermatogenesis-associated protein 16</fullName>
    </recommendedName>
</protein>
<sequence length="571" mass="65006">MDSGKSRSLETTVKRVYRDLLLPKINTSKKMSTLTNSPSSLEGTPGIKKNSGEMQAEASAERVKLTKSIKEKQNNELEKVALKRKADSEEKLVGKKEAKIMELDNQLVTTVPLPHIPLKNIMDVEMKLVYVDEEDVSYEFAQPNMCLGLQATGQTATTMPPASPRDLTTLPQIDKWLQVALKDASSCYRQKKYAVAAGQFRTALELCSKGAALGKPFEAHAEDIASIASFIETKLVTCYLRMRKPDLALNHAHRSIVLNPAYFRNHLRQAAVFRCLERYSEAARSAMIADYMFWLCGGSEHSVSKLIKLYWQAMIEEAITRAEAFSVMYTPFATRIKPENIEKVKEVFMRTHPTYVDCIYTDTQGLHVLPQTADWSCFPPQQYLLTLGFKNKEDGKFLEKVSSRKLPTYTEHKTPFSPLTREDTVRHMETVGKRILPILDFIRSTQLNGNFHACSGVMEKLHYASLLSRLQRVKEQAQVINQAMAELATVPYLQDISQQEAELLQSLMADAMDTLEGKKSDKERVWNTIQKVGRIEDFLYQLEDSFLKTKKLRTARRQKTKMKRLQTVQQN</sequence>
<proteinExistence type="evidence at protein level"/>
<evidence type="ECO:0000256" key="1">
    <source>
        <dbReference type="SAM" id="MobiDB-lite"/>
    </source>
</evidence>
<evidence type="ECO:0000269" key="2">
    <source>
    </source>
</evidence>
<evidence type="ECO:0000269" key="3">
    <source>
    </source>
</evidence>
<evidence type="ECO:0000269" key="4">
    <source>
    </source>
</evidence>
<evidence type="ECO:0000303" key="5">
    <source>
    </source>
</evidence>
<evidence type="ECO:0000303" key="6">
    <source>
    </source>
</evidence>
<evidence type="ECO:0000305" key="7"/>
<organism>
    <name type="scientific">Mus musculus</name>
    <name type="common">Mouse</name>
    <dbReference type="NCBI Taxonomy" id="10090"/>
    <lineage>
        <taxon>Eukaryota</taxon>
        <taxon>Metazoa</taxon>
        <taxon>Chordata</taxon>
        <taxon>Craniata</taxon>
        <taxon>Vertebrata</taxon>
        <taxon>Euteleostomi</taxon>
        <taxon>Mammalia</taxon>
        <taxon>Eutheria</taxon>
        <taxon>Euarchontoglires</taxon>
        <taxon>Glires</taxon>
        <taxon>Rodentia</taxon>
        <taxon>Myomorpha</taxon>
        <taxon>Muroidea</taxon>
        <taxon>Muridae</taxon>
        <taxon>Murinae</taxon>
        <taxon>Mus</taxon>
        <taxon>Mus</taxon>
    </lineage>
</organism>
<reference key="1">
    <citation type="journal article" date="2005" name="Science">
        <title>The transcriptional landscape of the mammalian genome.</title>
        <authorList>
            <person name="Carninci P."/>
            <person name="Kasukawa T."/>
            <person name="Katayama S."/>
            <person name="Gough J."/>
            <person name="Frith M.C."/>
            <person name="Maeda N."/>
            <person name="Oyama R."/>
            <person name="Ravasi T."/>
            <person name="Lenhard B."/>
            <person name="Wells C."/>
            <person name="Kodzius R."/>
            <person name="Shimokawa K."/>
            <person name="Bajic V.B."/>
            <person name="Brenner S.E."/>
            <person name="Batalov S."/>
            <person name="Forrest A.R."/>
            <person name="Zavolan M."/>
            <person name="Davis M.J."/>
            <person name="Wilming L.G."/>
            <person name="Aidinis V."/>
            <person name="Allen J.E."/>
            <person name="Ambesi-Impiombato A."/>
            <person name="Apweiler R."/>
            <person name="Aturaliya R.N."/>
            <person name="Bailey T.L."/>
            <person name="Bansal M."/>
            <person name="Baxter L."/>
            <person name="Beisel K.W."/>
            <person name="Bersano T."/>
            <person name="Bono H."/>
            <person name="Chalk A.M."/>
            <person name="Chiu K.P."/>
            <person name="Choudhary V."/>
            <person name="Christoffels A."/>
            <person name="Clutterbuck D.R."/>
            <person name="Crowe M.L."/>
            <person name="Dalla E."/>
            <person name="Dalrymple B.P."/>
            <person name="de Bono B."/>
            <person name="Della Gatta G."/>
            <person name="di Bernardo D."/>
            <person name="Down T."/>
            <person name="Engstrom P."/>
            <person name="Fagiolini M."/>
            <person name="Faulkner G."/>
            <person name="Fletcher C.F."/>
            <person name="Fukushima T."/>
            <person name="Furuno M."/>
            <person name="Futaki S."/>
            <person name="Gariboldi M."/>
            <person name="Georgii-Hemming P."/>
            <person name="Gingeras T.R."/>
            <person name="Gojobori T."/>
            <person name="Green R.E."/>
            <person name="Gustincich S."/>
            <person name="Harbers M."/>
            <person name="Hayashi Y."/>
            <person name="Hensch T.K."/>
            <person name="Hirokawa N."/>
            <person name="Hill D."/>
            <person name="Huminiecki L."/>
            <person name="Iacono M."/>
            <person name="Ikeo K."/>
            <person name="Iwama A."/>
            <person name="Ishikawa T."/>
            <person name="Jakt M."/>
            <person name="Kanapin A."/>
            <person name="Katoh M."/>
            <person name="Kawasawa Y."/>
            <person name="Kelso J."/>
            <person name="Kitamura H."/>
            <person name="Kitano H."/>
            <person name="Kollias G."/>
            <person name="Krishnan S.P."/>
            <person name="Kruger A."/>
            <person name="Kummerfeld S.K."/>
            <person name="Kurochkin I.V."/>
            <person name="Lareau L.F."/>
            <person name="Lazarevic D."/>
            <person name="Lipovich L."/>
            <person name="Liu J."/>
            <person name="Liuni S."/>
            <person name="McWilliam S."/>
            <person name="Madan Babu M."/>
            <person name="Madera M."/>
            <person name="Marchionni L."/>
            <person name="Matsuda H."/>
            <person name="Matsuzawa S."/>
            <person name="Miki H."/>
            <person name="Mignone F."/>
            <person name="Miyake S."/>
            <person name="Morris K."/>
            <person name="Mottagui-Tabar S."/>
            <person name="Mulder N."/>
            <person name="Nakano N."/>
            <person name="Nakauchi H."/>
            <person name="Ng P."/>
            <person name="Nilsson R."/>
            <person name="Nishiguchi S."/>
            <person name="Nishikawa S."/>
            <person name="Nori F."/>
            <person name="Ohara O."/>
            <person name="Okazaki Y."/>
            <person name="Orlando V."/>
            <person name="Pang K.C."/>
            <person name="Pavan W.J."/>
            <person name="Pavesi G."/>
            <person name="Pesole G."/>
            <person name="Petrovsky N."/>
            <person name="Piazza S."/>
            <person name="Reed J."/>
            <person name="Reid J.F."/>
            <person name="Ring B.Z."/>
            <person name="Ringwald M."/>
            <person name="Rost B."/>
            <person name="Ruan Y."/>
            <person name="Salzberg S.L."/>
            <person name="Sandelin A."/>
            <person name="Schneider C."/>
            <person name="Schoenbach C."/>
            <person name="Sekiguchi K."/>
            <person name="Semple C.A."/>
            <person name="Seno S."/>
            <person name="Sessa L."/>
            <person name="Sheng Y."/>
            <person name="Shibata Y."/>
            <person name="Shimada H."/>
            <person name="Shimada K."/>
            <person name="Silva D."/>
            <person name="Sinclair B."/>
            <person name="Sperling S."/>
            <person name="Stupka E."/>
            <person name="Sugiura K."/>
            <person name="Sultana R."/>
            <person name="Takenaka Y."/>
            <person name="Taki K."/>
            <person name="Tammoja K."/>
            <person name="Tan S.L."/>
            <person name="Tang S."/>
            <person name="Taylor M.S."/>
            <person name="Tegner J."/>
            <person name="Teichmann S.A."/>
            <person name="Ueda H.R."/>
            <person name="van Nimwegen E."/>
            <person name="Verardo R."/>
            <person name="Wei C.L."/>
            <person name="Yagi K."/>
            <person name="Yamanishi H."/>
            <person name="Zabarovsky E."/>
            <person name="Zhu S."/>
            <person name="Zimmer A."/>
            <person name="Hide W."/>
            <person name="Bult C."/>
            <person name="Grimmond S.M."/>
            <person name="Teasdale R.D."/>
            <person name="Liu E.T."/>
            <person name="Brusic V."/>
            <person name="Quackenbush J."/>
            <person name="Wahlestedt C."/>
            <person name="Mattick J.S."/>
            <person name="Hume D.A."/>
            <person name="Kai C."/>
            <person name="Sasaki D."/>
            <person name="Tomaru Y."/>
            <person name="Fukuda S."/>
            <person name="Kanamori-Katayama M."/>
            <person name="Suzuki M."/>
            <person name="Aoki J."/>
            <person name="Arakawa T."/>
            <person name="Iida J."/>
            <person name="Imamura K."/>
            <person name="Itoh M."/>
            <person name="Kato T."/>
            <person name="Kawaji H."/>
            <person name="Kawagashira N."/>
            <person name="Kawashima T."/>
            <person name="Kojima M."/>
            <person name="Kondo S."/>
            <person name="Konno H."/>
            <person name="Nakano K."/>
            <person name="Ninomiya N."/>
            <person name="Nishio T."/>
            <person name="Okada M."/>
            <person name="Plessy C."/>
            <person name="Shibata K."/>
            <person name="Shiraki T."/>
            <person name="Suzuki S."/>
            <person name="Tagami M."/>
            <person name="Waki K."/>
            <person name="Watahiki A."/>
            <person name="Okamura-Oho Y."/>
            <person name="Suzuki H."/>
            <person name="Kawai J."/>
            <person name="Hayashizaki Y."/>
        </authorList>
    </citation>
    <scope>NUCLEOTIDE SEQUENCE [LARGE SCALE MRNA] (ISOFORMS 1 AND 2)</scope>
</reference>
<reference key="2">
    <citation type="journal article" date="2004" name="Genome Res.">
        <title>The status, quality, and expansion of the NIH full-length cDNA project: the Mammalian Gene Collection (MGC).</title>
        <authorList>
            <consortium name="The MGC Project Team"/>
        </authorList>
    </citation>
    <scope>NUCLEOTIDE SEQUENCE [LARGE SCALE MRNA] (ISOFORMS 1 AND 2)</scope>
</reference>
<reference key="3">
    <citation type="journal article" date="2003" name="Mol. Hum. Reprod.">
        <title>Identification and characterization of a novel human testis-specific Golgi protein, NYD-SP12.</title>
        <authorList>
            <person name="Xu M."/>
            <person name="Xiao J."/>
            <person name="Chen J."/>
            <person name="Li J."/>
            <person name="Yin L."/>
            <person name="Zhu H."/>
            <person name="Zhou Z."/>
            <person name="Sha J."/>
        </authorList>
    </citation>
    <scope>TISSUE SPECIFICITY</scope>
    <scope>SUBCELLULAR LOCATION</scope>
</reference>
<reference key="4">
    <citation type="journal article" date="2006" name="Asian J. Androl.">
        <title>Gene functional research using polyethylenimine-mediated in vivo gene transfection into mouse spermatogenic cells.</title>
        <authorList>
            <person name="Lu L."/>
            <person name="Lin M."/>
            <person name="Xu M."/>
            <person name="Zhou Z.-M."/>
            <person name="Sha J."/>
        </authorList>
    </citation>
    <scope>FUNCTION</scope>
    <scope>SUBCELLULAR LOCATION</scope>
    <scope>TISSUE SPECIFICITY</scope>
</reference>
<reference key="5">
    <citation type="journal article" date="2017" name="Int. J. Mol. Sci.">
        <title>Human Globozoospermia-Related Gene Spata16 Is Required for Sperm Formation Revealed by CRISPR/Cas9-Mediated Mouse Models.</title>
        <authorList>
            <person name="Fujihara Y."/>
            <person name="Oji A."/>
            <person name="Larasati T."/>
            <person name="Kojima-Kita K."/>
            <person name="Ikawa M."/>
        </authorList>
    </citation>
    <scope>FUNCTION</scope>
    <scope>TISSUE SPECIFICITY</scope>
    <scope>DISRUPTION PHENOTYPE</scope>
    <scope>MUTAGENESIS OF ARG-284</scope>
</reference>